<name>END4_ALIB4</name>
<protein>
    <recommendedName>
        <fullName evidence="1">Probable endonuclease 4</fullName>
        <ecNumber evidence="1">3.1.21.2</ecNumber>
    </recommendedName>
    <alternativeName>
        <fullName evidence="1">Endodeoxyribonuclease IV</fullName>
    </alternativeName>
    <alternativeName>
        <fullName evidence="1">Endonuclease IV</fullName>
    </alternativeName>
</protein>
<feature type="chain" id="PRO_1000076799" description="Probable endonuclease 4">
    <location>
        <begin position="1"/>
        <end position="280"/>
    </location>
</feature>
<feature type="binding site" evidence="1">
    <location>
        <position position="69"/>
    </location>
    <ligand>
        <name>Zn(2+)</name>
        <dbReference type="ChEBI" id="CHEBI:29105"/>
        <label>1</label>
    </ligand>
</feature>
<feature type="binding site" evidence="1">
    <location>
        <position position="109"/>
    </location>
    <ligand>
        <name>Zn(2+)</name>
        <dbReference type="ChEBI" id="CHEBI:29105"/>
        <label>1</label>
    </ligand>
</feature>
<feature type="binding site" evidence="1">
    <location>
        <position position="145"/>
    </location>
    <ligand>
        <name>Zn(2+)</name>
        <dbReference type="ChEBI" id="CHEBI:29105"/>
        <label>1</label>
    </ligand>
</feature>
<feature type="binding site" evidence="1">
    <location>
        <position position="145"/>
    </location>
    <ligand>
        <name>Zn(2+)</name>
        <dbReference type="ChEBI" id="CHEBI:29105"/>
        <label>2</label>
    </ligand>
</feature>
<feature type="binding site" evidence="1">
    <location>
        <position position="179"/>
    </location>
    <ligand>
        <name>Zn(2+)</name>
        <dbReference type="ChEBI" id="CHEBI:29105"/>
        <label>2</label>
    </ligand>
</feature>
<feature type="binding site" evidence="1">
    <location>
        <position position="182"/>
    </location>
    <ligand>
        <name>Zn(2+)</name>
        <dbReference type="ChEBI" id="CHEBI:29105"/>
        <label>3</label>
    </ligand>
</feature>
<feature type="binding site" evidence="1">
    <location>
        <position position="216"/>
    </location>
    <ligand>
        <name>Zn(2+)</name>
        <dbReference type="ChEBI" id="CHEBI:29105"/>
        <label>2</label>
    </ligand>
</feature>
<feature type="binding site" evidence="1">
    <location>
        <position position="229"/>
    </location>
    <ligand>
        <name>Zn(2+)</name>
        <dbReference type="ChEBI" id="CHEBI:29105"/>
        <label>3</label>
    </ligand>
</feature>
<feature type="binding site" evidence="1">
    <location>
        <position position="231"/>
    </location>
    <ligand>
        <name>Zn(2+)</name>
        <dbReference type="ChEBI" id="CHEBI:29105"/>
        <label>3</label>
    </ligand>
</feature>
<feature type="binding site" evidence="1">
    <location>
        <position position="261"/>
    </location>
    <ligand>
        <name>Zn(2+)</name>
        <dbReference type="ChEBI" id="CHEBI:29105"/>
        <label>2</label>
    </ligand>
</feature>
<keyword id="KW-0227">DNA damage</keyword>
<keyword id="KW-0234">DNA repair</keyword>
<keyword id="KW-0255">Endonuclease</keyword>
<keyword id="KW-0378">Hydrolase</keyword>
<keyword id="KW-0479">Metal-binding</keyword>
<keyword id="KW-0540">Nuclease</keyword>
<keyword id="KW-1185">Reference proteome</keyword>
<keyword id="KW-0862">Zinc</keyword>
<organism>
    <name type="scientific">Aliarcobacter butzleri (strain RM4018)</name>
    <name type="common">Arcobacter butzleri</name>
    <dbReference type="NCBI Taxonomy" id="367737"/>
    <lineage>
        <taxon>Bacteria</taxon>
        <taxon>Pseudomonadati</taxon>
        <taxon>Campylobacterota</taxon>
        <taxon>Epsilonproteobacteria</taxon>
        <taxon>Campylobacterales</taxon>
        <taxon>Arcobacteraceae</taxon>
        <taxon>Aliarcobacter</taxon>
    </lineage>
</organism>
<comment type="function">
    <text evidence="1">Endonuclease IV plays a role in DNA repair. It cleaves phosphodiester bonds at apurinic or apyrimidinic (AP) sites, generating a 3'-hydroxyl group and a 5'-terminal sugar phosphate.</text>
</comment>
<comment type="catalytic activity">
    <reaction evidence="1">
        <text>Endonucleolytic cleavage to 5'-phosphooligonucleotide end-products.</text>
        <dbReference type="EC" id="3.1.21.2"/>
    </reaction>
</comment>
<comment type="cofactor">
    <cofactor evidence="1">
        <name>Zn(2+)</name>
        <dbReference type="ChEBI" id="CHEBI:29105"/>
    </cofactor>
    <text evidence="1">Binds 3 Zn(2+) ions.</text>
</comment>
<comment type="similarity">
    <text evidence="1">Belongs to the AP endonuclease 2 family.</text>
</comment>
<gene>
    <name evidence="1" type="primary">nfo</name>
    <name type="ordered locus">Abu_2221</name>
</gene>
<dbReference type="EC" id="3.1.21.2" evidence="1"/>
<dbReference type="EMBL" id="CP000361">
    <property type="protein sequence ID" value="ABV68434.1"/>
    <property type="molecule type" value="Genomic_DNA"/>
</dbReference>
<dbReference type="RefSeq" id="WP_012148069.1">
    <property type="nucleotide sequence ID" value="NC_009850.1"/>
</dbReference>
<dbReference type="SMR" id="A8EWW1"/>
<dbReference type="STRING" id="367737.Abu_2221"/>
<dbReference type="GeneID" id="24305291"/>
<dbReference type="KEGG" id="abu:Abu_2221"/>
<dbReference type="eggNOG" id="COG0648">
    <property type="taxonomic scope" value="Bacteria"/>
</dbReference>
<dbReference type="HOGENOM" id="CLU_025885_0_4_7"/>
<dbReference type="Proteomes" id="UP000001136">
    <property type="component" value="Chromosome"/>
</dbReference>
<dbReference type="GO" id="GO:0008833">
    <property type="term" value="F:deoxyribonuclease IV (phage-T4-induced) activity"/>
    <property type="evidence" value="ECO:0007669"/>
    <property type="project" value="UniProtKB-UniRule"/>
</dbReference>
<dbReference type="GO" id="GO:0003677">
    <property type="term" value="F:DNA binding"/>
    <property type="evidence" value="ECO:0007669"/>
    <property type="project" value="InterPro"/>
</dbReference>
<dbReference type="GO" id="GO:0003906">
    <property type="term" value="F:DNA-(apurinic or apyrimidinic site) endonuclease activity"/>
    <property type="evidence" value="ECO:0007669"/>
    <property type="project" value="TreeGrafter"/>
</dbReference>
<dbReference type="GO" id="GO:0008081">
    <property type="term" value="F:phosphoric diester hydrolase activity"/>
    <property type="evidence" value="ECO:0007669"/>
    <property type="project" value="TreeGrafter"/>
</dbReference>
<dbReference type="GO" id="GO:0008270">
    <property type="term" value="F:zinc ion binding"/>
    <property type="evidence" value="ECO:0007669"/>
    <property type="project" value="UniProtKB-UniRule"/>
</dbReference>
<dbReference type="GO" id="GO:0006284">
    <property type="term" value="P:base-excision repair"/>
    <property type="evidence" value="ECO:0007669"/>
    <property type="project" value="TreeGrafter"/>
</dbReference>
<dbReference type="CDD" id="cd00019">
    <property type="entry name" value="AP2Ec"/>
    <property type="match status" value="1"/>
</dbReference>
<dbReference type="FunFam" id="3.20.20.150:FF:000001">
    <property type="entry name" value="Probable endonuclease 4"/>
    <property type="match status" value="1"/>
</dbReference>
<dbReference type="Gene3D" id="3.20.20.150">
    <property type="entry name" value="Divalent-metal-dependent TIM barrel enzymes"/>
    <property type="match status" value="1"/>
</dbReference>
<dbReference type="HAMAP" id="MF_00152">
    <property type="entry name" value="Nfo"/>
    <property type="match status" value="1"/>
</dbReference>
<dbReference type="InterPro" id="IPR001719">
    <property type="entry name" value="AP_endonuc_2"/>
</dbReference>
<dbReference type="InterPro" id="IPR018246">
    <property type="entry name" value="AP_endonuc_F2_Zn_BS"/>
</dbReference>
<dbReference type="InterPro" id="IPR036237">
    <property type="entry name" value="Xyl_isomerase-like_sf"/>
</dbReference>
<dbReference type="InterPro" id="IPR013022">
    <property type="entry name" value="Xyl_isomerase-like_TIM-brl"/>
</dbReference>
<dbReference type="NCBIfam" id="TIGR00587">
    <property type="entry name" value="nfo"/>
    <property type="match status" value="1"/>
</dbReference>
<dbReference type="NCBIfam" id="NF002199">
    <property type="entry name" value="PRK01060.1-4"/>
    <property type="match status" value="1"/>
</dbReference>
<dbReference type="PANTHER" id="PTHR21445:SF0">
    <property type="entry name" value="APURINIC-APYRIMIDINIC ENDONUCLEASE"/>
    <property type="match status" value="1"/>
</dbReference>
<dbReference type="PANTHER" id="PTHR21445">
    <property type="entry name" value="ENDONUCLEASE IV ENDODEOXYRIBONUCLEASE IV"/>
    <property type="match status" value="1"/>
</dbReference>
<dbReference type="Pfam" id="PF01261">
    <property type="entry name" value="AP_endonuc_2"/>
    <property type="match status" value="1"/>
</dbReference>
<dbReference type="SMART" id="SM00518">
    <property type="entry name" value="AP2Ec"/>
    <property type="match status" value="1"/>
</dbReference>
<dbReference type="SUPFAM" id="SSF51658">
    <property type="entry name" value="Xylose isomerase-like"/>
    <property type="match status" value="1"/>
</dbReference>
<dbReference type="PROSITE" id="PS00729">
    <property type="entry name" value="AP_NUCLEASE_F2_1"/>
    <property type="match status" value="1"/>
</dbReference>
<dbReference type="PROSITE" id="PS00730">
    <property type="entry name" value="AP_NUCLEASE_F2_2"/>
    <property type="match status" value="1"/>
</dbReference>
<dbReference type="PROSITE" id="PS00731">
    <property type="entry name" value="AP_NUCLEASE_F2_3"/>
    <property type="match status" value="1"/>
</dbReference>
<dbReference type="PROSITE" id="PS51432">
    <property type="entry name" value="AP_NUCLEASE_F2_4"/>
    <property type="match status" value="1"/>
</dbReference>
<evidence type="ECO:0000255" key="1">
    <source>
        <dbReference type="HAMAP-Rule" id="MF_00152"/>
    </source>
</evidence>
<sequence length="280" mass="31919">MKYIGAHVSASGGVFNAPINATQIGAKAFALFTKNQRQWSAKALDNKTIDLWFKELEKSKIEPKHILPHDSYLINLGHPDSDAREKSIESFLDEVQRCEILALDRLNFHPGSHLRKISEEECLDNIAESMNRVIDKTSGVKLVIENTAGQGSNLGYKFEHLAYIIDKIEDKSRVGVCIDTCHMFTAGYDIRTREAYDKTWNEFEKIVGFKYLSGMHINDSKPELGSRVDRHDSLGCGKIGWDAFEFIMNDKRMNDIPLVLETIDESIWAEEIKTLYNFIK</sequence>
<reference key="1">
    <citation type="journal article" date="2007" name="PLoS ONE">
        <title>The complete genome sequence and analysis of the Epsilonproteobacterium Arcobacter butzleri.</title>
        <authorList>
            <person name="Miller W.G."/>
            <person name="Parker C.T."/>
            <person name="Rubenfield M."/>
            <person name="Mendz G.L."/>
            <person name="Woesten M.M.S.M."/>
            <person name="Ussery D.W."/>
            <person name="Stolz J.F."/>
            <person name="Binnewies T.T."/>
            <person name="Hallin P.F."/>
            <person name="Wang G."/>
            <person name="Malek J.A."/>
            <person name="Rogosin A."/>
            <person name="Stanker L.H."/>
            <person name="Mandrell R.E."/>
        </authorList>
    </citation>
    <scope>NUCLEOTIDE SEQUENCE [LARGE SCALE GENOMIC DNA]</scope>
    <source>
        <strain>RM4018</strain>
    </source>
</reference>
<proteinExistence type="inferred from homology"/>
<accession>A8EWW1</accession>